<proteinExistence type="inferred from homology"/>
<sequence>MAIHLYKTSTPSTRNGTVDSQVKSNPRNNLIYGQHRCGKGRNARGIITAGHRGGGHKRLYRKIDFRRTEKDIYGRIVTIEYDPNRNAYICLIHYGDGEKRYILHPRGALIGDTIVSGTEVPIKMGNALPLSATDMPLGTAIHNIEITLGKGGQLARAAGAVAKLIAKEGKSATLKLPSGEVRLISKNCSATVGQVGNVGVNQKSLGRAGSKRWLGKRPVVRGVVMNPVDHPHGGGEGRAPIGRKKPTTPWGYPALGRRSRKRNKYSDNLILRRRSK</sequence>
<keyword id="KW-0150">Chloroplast</keyword>
<keyword id="KW-0934">Plastid</keyword>
<keyword id="KW-1185">Reference proteome</keyword>
<keyword id="KW-0687">Ribonucleoprotein</keyword>
<keyword id="KW-0689">Ribosomal protein</keyword>
<feature type="chain" id="PRO_0000277086" description="Large ribosomal subunit protein uL2cy">
    <location>
        <begin position="1"/>
        <end position="276"/>
    </location>
</feature>
<feature type="region of interest" description="Disordered" evidence="3">
    <location>
        <begin position="1"/>
        <end position="25"/>
    </location>
</feature>
<feature type="region of interest" description="Disordered" evidence="3">
    <location>
        <begin position="225"/>
        <end position="276"/>
    </location>
</feature>
<feature type="compositionally biased region" description="Polar residues" evidence="3">
    <location>
        <begin position="7"/>
        <end position="25"/>
    </location>
</feature>
<geneLocation type="chloroplast"/>
<protein>
    <recommendedName>
        <fullName evidence="2">Large ribosomal subunit protein uL2cy</fullName>
    </recommendedName>
    <alternativeName>
        <fullName evidence="4">50S ribosomal protein L2-B, chloroplastic</fullName>
    </alternativeName>
</protein>
<name>RK2B_COFAR</name>
<organism>
    <name type="scientific">Coffea arabica</name>
    <name type="common">Arabian coffee</name>
    <dbReference type="NCBI Taxonomy" id="13443"/>
    <lineage>
        <taxon>Eukaryota</taxon>
        <taxon>Viridiplantae</taxon>
        <taxon>Streptophyta</taxon>
        <taxon>Embryophyta</taxon>
        <taxon>Tracheophyta</taxon>
        <taxon>Spermatophyta</taxon>
        <taxon>Magnoliopsida</taxon>
        <taxon>eudicotyledons</taxon>
        <taxon>Gunneridae</taxon>
        <taxon>Pentapetalae</taxon>
        <taxon>asterids</taxon>
        <taxon>lamiids</taxon>
        <taxon>Gentianales</taxon>
        <taxon>Rubiaceae</taxon>
        <taxon>Ixoroideae</taxon>
        <taxon>Gardenieae complex</taxon>
        <taxon>Bertiereae - Coffeeae clade</taxon>
        <taxon>Coffeeae</taxon>
        <taxon>Coffea</taxon>
    </lineage>
</organism>
<gene>
    <name type="primary">rpl2-B</name>
</gene>
<evidence type="ECO:0000250" key="1"/>
<evidence type="ECO:0000255" key="2">
    <source>
        <dbReference type="HAMAP-Rule" id="MF_01320"/>
    </source>
</evidence>
<evidence type="ECO:0000256" key="3">
    <source>
        <dbReference type="SAM" id="MobiDB-lite"/>
    </source>
</evidence>
<evidence type="ECO:0000305" key="4"/>
<comment type="subunit">
    <text evidence="1">Part of the 50S ribosomal subunit.</text>
</comment>
<comment type="subcellular location">
    <subcellularLocation>
        <location>Plastid</location>
        <location>Chloroplast</location>
    </subcellularLocation>
</comment>
<comment type="similarity">
    <text evidence="4">Belongs to the universal ribosomal protein uL2 family.</text>
</comment>
<comment type="caution">
    <text evidence="4">There is 1 gene for this protein in each of the chloroplast inverted repeats; while they are usually identical, in this organism they are not. The other copy is AC A0A377.</text>
</comment>
<accession>A0A398</accession>
<reference key="1">
    <citation type="journal article" date="2007" name="Plant Biotechnol. J.">
        <title>The complete nucleotide sequence of the coffee (Coffea arabica L.) chloroplast genome: organization and implications for biotechnology and phylogenetic relationships amongst angiosperms.</title>
        <authorList>
            <person name="Samson N."/>
            <person name="Bausher M.G."/>
            <person name="Lee S.-B."/>
            <person name="Jansen R.K."/>
            <person name="Daniell H."/>
        </authorList>
    </citation>
    <scope>NUCLEOTIDE SEQUENCE [LARGE SCALE GENOMIC DNA]</scope>
</reference>
<dbReference type="EMBL" id="EF044213">
    <property type="protein sequence ID" value="ABJ89743.1"/>
    <property type="molecule type" value="Genomic_DNA"/>
</dbReference>
<dbReference type="SMR" id="A0A398"/>
<dbReference type="OrthoDB" id="563959at2759"/>
<dbReference type="Proteomes" id="UP000515148">
    <property type="component" value="Unplaced"/>
</dbReference>
<dbReference type="GO" id="GO:0009507">
    <property type="term" value="C:chloroplast"/>
    <property type="evidence" value="ECO:0007669"/>
    <property type="project" value="UniProtKB-SubCell"/>
</dbReference>
<dbReference type="GO" id="GO:0005762">
    <property type="term" value="C:mitochondrial large ribosomal subunit"/>
    <property type="evidence" value="ECO:0007669"/>
    <property type="project" value="TreeGrafter"/>
</dbReference>
<dbReference type="GO" id="GO:0019843">
    <property type="term" value="F:rRNA binding"/>
    <property type="evidence" value="ECO:0007669"/>
    <property type="project" value="UniProtKB-UniRule"/>
</dbReference>
<dbReference type="GO" id="GO:0003735">
    <property type="term" value="F:structural constituent of ribosome"/>
    <property type="evidence" value="ECO:0007669"/>
    <property type="project" value="InterPro"/>
</dbReference>
<dbReference type="GO" id="GO:0016740">
    <property type="term" value="F:transferase activity"/>
    <property type="evidence" value="ECO:0007669"/>
    <property type="project" value="InterPro"/>
</dbReference>
<dbReference type="GO" id="GO:0032543">
    <property type="term" value="P:mitochondrial translation"/>
    <property type="evidence" value="ECO:0007669"/>
    <property type="project" value="TreeGrafter"/>
</dbReference>
<dbReference type="FunFam" id="4.10.950.10:FF:000001">
    <property type="entry name" value="50S ribosomal protein L2"/>
    <property type="match status" value="1"/>
</dbReference>
<dbReference type="FunFam" id="2.30.30.30:FF:000008">
    <property type="entry name" value="50S ribosomal protein L2, chloroplastic"/>
    <property type="match status" value="1"/>
</dbReference>
<dbReference type="FunFam" id="2.40.50.140:FF:000029">
    <property type="entry name" value="50S ribosomal protein L2, chloroplastic"/>
    <property type="match status" value="1"/>
</dbReference>
<dbReference type="Gene3D" id="2.30.30.30">
    <property type="match status" value="1"/>
</dbReference>
<dbReference type="Gene3D" id="2.40.50.140">
    <property type="entry name" value="Nucleic acid-binding proteins"/>
    <property type="match status" value="1"/>
</dbReference>
<dbReference type="Gene3D" id="4.10.950.10">
    <property type="entry name" value="Ribosomal protein L2, domain 3"/>
    <property type="match status" value="1"/>
</dbReference>
<dbReference type="HAMAP" id="MF_01320_B">
    <property type="entry name" value="Ribosomal_uL2_B"/>
    <property type="match status" value="1"/>
</dbReference>
<dbReference type="InterPro" id="IPR012340">
    <property type="entry name" value="NA-bd_OB-fold"/>
</dbReference>
<dbReference type="InterPro" id="IPR014722">
    <property type="entry name" value="Rib_uL2_dom2"/>
</dbReference>
<dbReference type="InterPro" id="IPR002171">
    <property type="entry name" value="Ribosomal_uL2"/>
</dbReference>
<dbReference type="InterPro" id="IPR005880">
    <property type="entry name" value="Ribosomal_uL2_bac/org-type"/>
</dbReference>
<dbReference type="InterPro" id="IPR022669">
    <property type="entry name" value="Ribosomal_uL2_C"/>
</dbReference>
<dbReference type="InterPro" id="IPR022671">
    <property type="entry name" value="Ribosomal_uL2_CS"/>
</dbReference>
<dbReference type="InterPro" id="IPR014726">
    <property type="entry name" value="Ribosomal_uL2_dom3"/>
</dbReference>
<dbReference type="InterPro" id="IPR022666">
    <property type="entry name" value="Ribosomal_uL2_RNA-bd_dom"/>
</dbReference>
<dbReference type="InterPro" id="IPR008991">
    <property type="entry name" value="Translation_prot_SH3-like_sf"/>
</dbReference>
<dbReference type="NCBIfam" id="TIGR01171">
    <property type="entry name" value="rplB_bact"/>
    <property type="match status" value="1"/>
</dbReference>
<dbReference type="PANTHER" id="PTHR13691:SF5">
    <property type="entry name" value="LARGE RIBOSOMAL SUBUNIT PROTEIN UL2M"/>
    <property type="match status" value="1"/>
</dbReference>
<dbReference type="PANTHER" id="PTHR13691">
    <property type="entry name" value="RIBOSOMAL PROTEIN L2"/>
    <property type="match status" value="1"/>
</dbReference>
<dbReference type="Pfam" id="PF00181">
    <property type="entry name" value="Ribosomal_L2"/>
    <property type="match status" value="1"/>
</dbReference>
<dbReference type="Pfam" id="PF03947">
    <property type="entry name" value="Ribosomal_L2_C"/>
    <property type="match status" value="1"/>
</dbReference>
<dbReference type="PIRSF" id="PIRSF002158">
    <property type="entry name" value="Ribosomal_L2"/>
    <property type="match status" value="1"/>
</dbReference>
<dbReference type="SMART" id="SM01383">
    <property type="entry name" value="Ribosomal_L2"/>
    <property type="match status" value="1"/>
</dbReference>
<dbReference type="SMART" id="SM01382">
    <property type="entry name" value="Ribosomal_L2_C"/>
    <property type="match status" value="1"/>
</dbReference>
<dbReference type="SUPFAM" id="SSF50249">
    <property type="entry name" value="Nucleic acid-binding proteins"/>
    <property type="match status" value="1"/>
</dbReference>
<dbReference type="SUPFAM" id="SSF50104">
    <property type="entry name" value="Translation proteins SH3-like domain"/>
    <property type="match status" value="1"/>
</dbReference>
<dbReference type="PROSITE" id="PS00467">
    <property type="entry name" value="RIBOSOMAL_L2"/>
    <property type="match status" value="1"/>
</dbReference>